<reference key="1">
    <citation type="journal article" date="2002" name="Neurochem. Res.">
        <title>Cloning of rat olfactory bulb tubulin tyrosine ligase cDNA: a dominant negative mutant and an antisense cDNA increase the proliferation rate of cells in culture.</title>
        <authorList>
            <person name="Mas C.R."/>
            <person name="Arregui C.O."/>
            <person name="Filiberti A."/>
            <person name="Argarana C.E."/>
            <person name="Barra H.S."/>
        </authorList>
    </citation>
    <scope>NUCLEOTIDE SEQUENCE [MRNA]</scope>
    <source>
        <strain>Sprague-Dawley</strain>
        <tissue>Olfactory bulb</tissue>
    </source>
</reference>
<reference key="2">
    <citation type="journal article" date="1997" name="Dev. Growth Differ.">
        <title>Tubulin tyrosine ligase: protein and mRNA expression in developing rat skeletal muscle.</title>
        <authorList>
            <person name="Arregui C.O."/>
            <person name="Mas C.R."/>
            <person name="Argarana C.E."/>
            <person name="Barra H.S."/>
        </authorList>
    </citation>
    <scope>NUCLEOTIDE SEQUENCE [MRNA] OF 1-220</scope>
    <scope>FUNCTION</scope>
    <scope>CATALYTIC ACTIVITY</scope>
    <source>
        <strain>Wistar</strain>
        <tissue>Brain</tissue>
    </source>
</reference>
<organism>
    <name type="scientific">Rattus norvegicus</name>
    <name type="common">Rat</name>
    <dbReference type="NCBI Taxonomy" id="10116"/>
    <lineage>
        <taxon>Eukaryota</taxon>
        <taxon>Metazoa</taxon>
        <taxon>Chordata</taxon>
        <taxon>Craniata</taxon>
        <taxon>Vertebrata</taxon>
        <taxon>Euteleostomi</taxon>
        <taxon>Mammalia</taxon>
        <taxon>Eutheria</taxon>
        <taxon>Euarchontoglires</taxon>
        <taxon>Glires</taxon>
        <taxon>Rodentia</taxon>
        <taxon>Myomorpha</taxon>
        <taxon>Muroidea</taxon>
        <taxon>Muridae</taxon>
        <taxon>Murinae</taxon>
        <taxon>Rattus</taxon>
    </lineage>
</organism>
<proteinExistence type="evidence at protein level"/>
<evidence type="ECO:0000250" key="1">
    <source>
        <dbReference type="UniProtKB" id="P38584"/>
    </source>
</evidence>
<evidence type="ECO:0000255" key="2">
    <source>
        <dbReference type="PROSITE-ProRule" id="PRU00568"/>
    </source>
</evidence>
<evidence type="ECO:0000269" key="3">
    <source>
    </source>
</evidence>
<evidence type="ECO:0000305" key="4"/>
<name>TTL_RAT</name>
<keyword id="KW-0067">ATP-binding</keyword>
<keyword id="KW-0436">Ligase</keyword>
<keyword id="KW-0460">Magnesium</keyword>
<keyword id="KW-0547">Nucleotide-binding</keyword>
<keyword id="KW-0630">Potassium</keyword>
<keyword id="KW-1185">Reference proteome</keyword>
<dbReference type="EC" id="6.3.2.25" evidence="3"/>
<dbReference type="EMBL" id="AF207605">
    <property type="protein sequence ID" value="AAF18465.1"/>
    <property type="molecule type" value="mRNA"/>
</dbReference>
<dbReference type="EMBL" id="U53214">
    <property type="protein sequence ID" value="AAD10402.1"/>
    <property type="molecule type" value="mRNA"/>
</dbReference>
<dbReference type="RefSeq" id="NP_612545.1">
    <property type="nucleotide sequence ID" value="NM_138536.1"/>
</dbReference>
<dbReference type="SMR" id="Q9QXJ0"/>
<dbReference type="FunCoup" id="Q9QXJ0">
    <property type="interactions" value="1880"/>
</dbReference>
<dbReference type="STRING" id="10116.ENSRNOP00000024695"/>
<dbReference type="PhosphoSitePlus" id="Q9QXJ0"/>
<dbReference type="jPOST" id="Q9QXJ0"/>
<dbReference type="PaxDb" id="10116-ENSRNOP00000024695"/>
<dbReference type="GeneID" id="171572"/>
<dbReference type="KEGG" id="rno:171572"/>
<dbReference type="UCSC" id="RGD:621113">
    <property type="organism name" value="rat"/>
</dbReference>
<dbReference type="AGR" id="RGD:621113"/>
<dbReference type="CTD" id="150465"/>
<dbReference type="RGD" id="621113">
    <property type="gene designation" value="Ttl"/>
</dbReference>
<dbReference type="eggNOG" id="KOG2157">
    <property type="taxonomic scope" value="Eukaryota"/>
</dbReference>
<dbReference type="InParanoid" id="Q9QXJ0"/>
<dbReference type="PhylomeDB" id="Q9QXJ0"/>
<dbReference type="BRENDA" id="6.3.2.25">
    <property type="organism ID" value="5301"/>
</dbReference>
<dbReference type="PRO" id="PR:Q9QXJ0"/>
<dbReference type="Proteomes" id="UP000002494">
    <property type="component" value="Unplaced"/>
</dbReference>
<dbReference type="GO" id="GO:0005876">
    <property type="term" value="C:spindle microtubule"/>
    <property type="evidence" value="ECO:0000266"/>
    <property type="project" value="RGD"/>
</dbReference>
<dbReference type="GO" id="GO:0005524">
    <property type="term" value="F:ATP binding"/>
    <property type="evidence" value="ECO:0007669"/>
    <property type="project" value="UniProtKB-KW"/>
</dbReference>
<dbReference type="GO" id="GO:0004835">
    <property type="term" value="F:tubulin-tyrosine ligase activity"/>
    <property type="evidence" value="ECO:0000314"/>
    <property type="project" value="RGD"/>
</dbReference>
<dbReference type="GO" id="GO:0000226">
    <property type="term" value="P:microtubule cytoskeleton organization"/>
    <property type="evidence" value="ECO:0000266"/>
    <property type="project" value="RGD"/>
</dbReference>
<dbReference type="GO" id="GO:0045931">
    <property type="term" value="P:positive regulation of mitotic cell cycle"/>
    <property type="evidence" value="ECO:0000266"/>
    <property type="project" value="RGD"/>
</dbReference>
<dbReference type="GO" id="GO:0043687">
    <property type="term" value="P:post-translational protein modification"/>
    <property type="evidence" value="ECO:0000266"/>
    <property type="project" value="RGD"/>
</dbReference>
<dbReference type="GO" id="GO:0030516">
    <property type="term" value="P:regulation of axon extension"/>
    <property type="evidence" value="ECO:0000266"/>
    <property type="project" value="RGD"/>
</dbReference>
<dbReference type="GO" id="GO:0090235">
    <property type="term" value="P:regulation of metaphase plate congression"/>
    <property type="evidence" value="ECO:0000266"/>
    <property type="project" value="RGD"/>
</dbReference>
<dbReference type="FunFam" id="3.30.470.20:FF:000049">
    <property type="entry name" value="tubulin--tyrosine ligase"/>
    <property type="match status" value="1"/>
</dbReference>
<dbReference type="Gene3D" id="3.40.50.11480">
    <property type="match status" value="1"/>
</dbReference>
<dbReference type="Gene3D" id="3.30.470.20">
    <property type="entry name" value="ATP-grasp fold, B domain"/>
    <property type="match status" value="1"/>
</dbReference>
<dbReference type="InterPro" id="IPR004344">
    <property type="entry name" value="TTL/TTLL_fam"/>
</dbReference>
<dbReference type="InterPro" id="IPR052492">
    <property type="entry name" value="Tubulin-tyrosine_ligase"/>
</dbReference>
<dbReference type="PANTHER" id="PTHR46570">
    <property type="entry name" value="TUBULIN--TYROSINE LIGASE"/>
    <property type="match status" value="1"/>
</dbReference>
<dbReference type="PANTHER" id="PTHR46570:SF1">
    <property type="entry name" value="TUBULIN--TYROSINE LIGASE"/>
    <property type="match status" value="1"/>
</dbReference>
<dbReference type="Pfam" id="PF03133">
    <property type="entry name" value="TTL"/>
    <property type="match status" value="1"/>
</dbReference>
<dbReference type="SUPFAM" id="SSF56059">
    <property type="entry name" value="Glutathione synthetase ATP-binding domain-like"/>
    <property type="match status" value="1"/>
</dbReference>
<dbReference type="PROSITE" id="PS51221">
    <property type="entry name" value="TTL"/>
    <property type="match status" value="1"/>
</dbReference>
<gene>
    <name type="primary">Ttl</name>
</gene>
<accession>Q9QXJ0</accession>
<accession>Q9Z1E5</accession>
<protein>
    <recommendedName>
        <fullName>Tubulin--tyrosine ligase</fullName>
        <shortName>TTL</shortName>
        <ecNumber evidence="3">6.3.2.25</ecNumber>
    </recommendedName>
</protein>
<feature type="chain" id="PRO_0000212437" description="Tubulin--tyrosine ligase">
    <location>
        <begin position="1"/>
        <end position="377"/>
    </location>
</feature>
<feature type="domain" description="TTL" evidence="2">
    <location>
        <begin position="3"/>
        <end position="370"/>
    </location>
</feature>
<comment type="function">
    <text evidence="3">Catalyzes the post-translational addition of a tyrosine to the C-terminal end of detyrosinated alpha-tubulin.</text>
</comment>
<comment type="catalytic activity">
    <reaction evidence="3">
        <text>C-terminal L-alpha-aminoacyl-L-glutamyl-L-glutamyl-[tubulin] + L-tyrosine + ATP = C-terminal L-alpha-aminoacyl-L-glutamyl-L-glutamyl-L-tyrosyl-[tubulin] + ADP + phosphate + H(+)</text>
        <dbReference type="Rhea" id="RHEA:17605"/>
        <dbReference type="Rhea" id="RHEA-COMP:16434"/>
        <dbReference type="Rhea" id="RHEA-COMP:16435"/>
        <dbReference type="ChEBI" id="CHEBI:15378"/>
        <dbReference type="ChEBI" id="CHEBI:30616"/>
        <dbReference type="ChEBI" id="CHEBI:43474"/>
        <dbReference type="ChEBI" id="CHEBI:58315"/>
        <dbReference type="ChEBI" id="CHEBI:149554"/>
        <dbReference type="ChEBI" id="CHEBI:149555"/>
        <dbReference type="ChEBI" id="CHEBI:456216"/>
        <dbReference type="EC" id="6.3.2.25"/>
    </reaction>
</comment>
<comment type="cofactor">
    <cofactor evidence="1">
        <name>Mg(2+)</name>
        <dbReference type="ChEBI" id="CHEBI:18420"/>
    </cofactor>
</comment>
<comment type="cofactor">
    <cofactor evidence="1">
        <name>K(+)</name>
        <dbReference type="ChEBI" id="CHEBI:29103"/>
    </cofactor>
</comment>
<comment type="subunit">
    <text evidence="1">Monomer.</text>
</comment>
<comment type="similarity">
    <text evidence="4">Belongs to the tubulin--tyrosine ligase family.</text>
</comment>
<sequence length="377" mass="43118">MYTFVVRQENSSVYAEVSRLLLATGYWKRLRRDNPRFNLMLGGRNRLPFGRLGHEPGLAQLVNYYRGADKLCRKASLVKLVKTSPELSESCSWFPESYVIHPTNLKTPVAPAQNGIQLPVSNSRTDEREFFLASYNRKKEDGEGNVWIAKSSAGAKGEGILISSEASELLDFIDNQGQVHVIQKYLEHPLLLEPGHRKFDIRSWVLVDHQYNIYLYREGVLRTASEPYHVDNFQDKTCHLTNHCIQKEYSKNYGKYEEGNEMFFEEFNQYLTSALNITLENSILLQIKHIIRSCLMSVEPAISTKHLPYQSFQLLGFDFMVDEELKVWLIEVNGAPACAQKLYAELCQGIVDIAISSVFPPPDTEQVPQQPAAFMKL</sequence>